<gene>
    <name type="primary">PMP3</name>
</gene>
<reference key="1">
    <citation type="submission" date="1999-12" db="EMBL/GenBank/DDBJ databases">
        <title>A novel method for systematic identification of genes required for growth of Candida albicans.</title>
        <authorList>
            <person name="De Backer M.D."/>
            <person name="Logghe M."/>
            <person name="Viaene J."/>
            <person name="Loonen I."/>
            <person name="Vandoninck S."/>
            <person name="de Hoogt R."/>
            <person name="Nelissen B."/>
            <person name="Dewaele S."/>
            <person name="Simons F."/>
            <person name="Verhasselt P."/>
            <person name="Contreras R."/>
            <person name="Luyten W.H.M.L."/>
        </authorList>
    </citation>
    <scope>NUCLEOTIDE SEQUENCE [MRNA]</scope>
</reference>
<proteinExistence type="inferred from homology"/>
<name>PMP3_CANAX</name>
<accession>Q9P824</accession>
<feature type="chain" id="PRO_0000193986" description="Plasma membrane proteolipid 3 homolog">
    <location>
        <begin position="1"/>
        <end position="55"/>
    </location>
</feature>
<feature type="transmembrane region" description="Helical" evidence="2">
    <location>
        <begin position="3"/>
        <end position="23"/>
    </location>
</feature>
<feature type="transmembrane region" description="Helical" evidence="2">
    <location>
        <begin position="31"/>
        <end position="51"/>
    </location>
</feature>
<comment type="function">
    <text evidence="1">Plays a role in the regulation of membrane potential.</text>
</comment>
<comment type="subcellular location">
    <subcellularLocation>
        <location>Membrane</location>
        <topology>Multi-pass membrane protein</topology>
    </subcellularLocation>
</comment>
<comment type="similarity">
    <text evidence="3">Belongs to the UPF0057 (PMP3) family.</text>
</comment>
<protein>
    <recommendedName>
        <fullName>Plasma membrane proteolipid 3 homolog</fullName>
    </recommendedName>
</protein>
<evidence type="ECO:0000250" key="1"/>
<evidence type="ECO:0000255" key="2"/>
<evidence type="ECO:0000305" key="3"/>
<keyword id="KW-0472">Membrane</keyword>
<keyword id="KW-0812">Transmembrane</keyword>
<keyword id="KW-1133">Transmembrane helix</keyword>
<organism>
    <name type="scientific">Candida albicans</name>
    <name type="common">Yeast</name>
    <dbReference type="NCBI Taxonomy" id="5476"/>
    <lineage>
        <taxon>Eukaryota</taxon>
        <taxon>Fungi</taxon>
        <taxon>Dikarya</taxon>
        <taxon>Ascomycota</taxon>
        <taxon>Saccharomycotina</taxon>
        <taxon>Pichiomycetes</taxon>
        <taxon>Debaryomycetaceae</taxon>
        <taxon>Candida/Lodderomyces clade</taxon>
        <taxon>Candida</taxon>
    </lineage>
</organism>
<dbReference type="EMBL" id="AJ390517">
    <property type="protein sequence ID" value="CAB77654.1"/>
    <property type="molecule type" value="mRNA"/>
</dbReference>
<dbReference type="EnsemblFungi" id="C3_01910C_A-T">
    <property type="protein sequence ID" value="C3_01910C_A-T-p1"/>
    <property type="gene ID" value="C3_01910C_A"/>
</dbReference>
<dbReference type="CGD" id="CAL0000198735">
    <property type="gene designation" value="PMP3"/>
</dbReference>
<dbReference type="VEuPathDB" id="FungiDB:C3_01910C_A"/>
<dbReference type="VEuPathDB" id="FungiDB:CAWG_02520"/>
<dbReference type="OMA" id="ACFIICW"/>
<dbReference type="PhylomeDB" id="Q9P824"/>
<dbReference type="GO" id="GO:0005886">
    <property type="term" value="C:plasma membrane"/>
    <property type="evidence" value="ECO:0000314"/>
    <property type="project" value="CGD"/>
</dbReference>
<dbReference type="GO" id="GO:0044180">
    <property type="term" value="P:filamentous growth of a unicellular organism"/>
    <property type="evidence" value="ECO:0000315"/>
    <property type="project" value="CGD"/>
</dbReference>
<dbReference type="GO" id="GO:0007009">
    <property type="term" value="P:plasma membrane organization"/>
    <property type="evidence" value="ECO:0000315"/>
    <property type="project" value="CGD"/>
</dbReference>
<dbReference type="InterPro" id="IPR000612">
    <property type="entry name" value="PMP3"/>
</dbReference>
<dbReference type="PANTHER" id="PTHR21659">
    <property type="entry name" value="HYDROPHOBIC PROTEIN RCI2 LOW TEMPERATURE AND SALT RESPONSIVE PROTEIN LTI6 -RELATED"/>
    <property type="match status" value="1"/>
</dbReference>
<dbReference type="PANTHER" id="PTHR21659:SF42">
    <property type="entry name" value="UPF0057 MEMBRANE PROTEIN ZK632.10-RELATED"/>
    <property type="match status" value="1"/>
</dbReference>
<dbReference type="Pfam" id="PF01679">
    <property type="entry name" value="Pmp3"/>
    <property type="match status" value="1"/>
</dbReference>
<dbReference type="PROSITE" id="PS01309">
    <property type="entry name" value="UPF0057"/>
    <property type="match status" value="1"/>
</dbReference>
<sequence length="55" mass="6230">MNSEKIIEVIIAIFLPPVAVFMKCGATTPLWINLVLCIFIWFPAILHALYVVLKD</sequence>